<evidence type="ECO:0000250" key="1">
    <source>
        <dbReference type="UniProtKB" id="Q96Q04"/>
    </source>
</evidence>
<evidence type="ECO:0000255" key="2"/>
<evidence type="ECO:0000255" key="3">
    <source>
        <dbReference type="PROSITE-ProRule" id="PRU00159"/>
    </source>
</evidence>
<evidence type="ECO:0000255" key="4">
    <source>
        <dbReference type="PROSITE-ProRule" id="PRU10028"/>
    </source>
</evidence>
<evidence type="ECO:0000256" key="5">
    <source>
        <dbReference type="SAM" id="MobiDB-lite"/>
    </source>
</evidence>
<evidence type="ECO:0000269" key="6">
    <source>
    </source>
</evidence>
<evidence type="ECO:0000269" key="7">
    <source>
    </source>
</evidence>
<evidence type="ECO:0000305" key="8"/>
<evidence type="ECO:0000305" key="9">
    <source>
    </source>
</evidence>
<evidence type="ECO:0007744" key="10">
    <source>
    </source>
</evidence>
<evidence type="ECO:0007744" key="11">
    <source>
    </source>
</evidence>
<evidence type="ECO:0007744" key="12">
    <source>
    </source>
</evidence>
<sequence length="1424" mass="150891">MPAPGALILLAAVSASGCLASPAHPDGFALSRAPLAPPYAVVLISCSGLLAFIFLLLTCLCCKRGDVRFKEFENPEGEDCSGEYTPPAEETSSSQSLPDVYILPLAEVSLPMPAPQPPHSDISTPLGLSRQHLSYLQEIGSGWFGKVILGEVFSDYSPAQVVVKELRASAGPLEQRKFISEAQPYRSLQHPNVLQCLGVCVETLPFLLIMEFCQLGDLKRYLRAQRPPEGMSPELPPRDLRTLQRMGLEIARGLAHLHSHNYVHSDLALRNCLLTSDLTVRIGDYGLAHSNYKEDYYLTPERLWVPLRWAAPELLGELHGSFVLVDQSRESNVWSLGVTLWELFEFGAQPYRHLSDEEVLAFVVRQQHVKLARPRLKLPYADYWYDILQSCWRPPAQRPSASDLQLQLTYLLSERPPRPPPPPPPPRDGPFPWPWPPSHSAPRPGTLSSQFPLLDGFPGADPDDVLTVTESSRGLNLECLWEKARRGAGRGGGAPPWQPASAPPAPHTNPSNPFYEALSTPSVLPVISARSPSVSSEYYIRLEEHGSPPEPLFPNDWDPLDPGVPGPQAPQTPSEVPQLVSETWASPLFPAPRPFPAQSSGSGGFLLSGWDPEGRGAGETLAGDPAEVLGEQGTAPWAEEEEEESSPGEDSSSLGGGPSRRGPLPCPLCSREGPCSCLPLERGDAVAGWGDHPALGCPHPPEDDSSLRAERGSLADLPLVPPTSAPLEFLDPLMGAAAPQYPGRGPPPAPPPPPPPPRASAEPAASPDPPSALASPGSGLSSPGPKPGDSGYETETPFSPEGAFPGGGAAKEEGVPRPRAPPEPPDPGAPRPPPDPGPLPLPGSQEKPTFVVQVSTEQLLMSLREDVTKNLLGDKGSTPGETGPRKAGRSPANREKGPGPNRDLTSLVSRKKVPSRSLPVNGVTVLENGKPGVPDMKEKVAENGLESPEKEERALVNGEPMSPEAGEKVLANGVLMSPKSEEKVAENGVLRLPRNTERPPEIGPRRVPGPWEKTPETGGLAPETLLDRAPAPCEAALPQNGLEMAPGQLGPAPKSGNPDPGTEWRVHESGGAPRAPGAGKLDLGSGGRALGGVGTAPAGGPASAVDAKAGWVDNSRPLPPPPQPLGAQQRRPEPVPLKARPEVAQEEEPGVPDNRLGGDMAPSVDEDPLKPERKGPEMPRLFLDLGPPQGNSEQIKAKLSRLSLALPPLTLTPFPGPGPRRPPWEGADAGAAGGEAGGAGAPGPAEEDGEDEDEDEEDEEAAGSRDPGRTREAPVPVVVSSADGDTVRPLRGLLKSPRAADEPEDSELERKRKMVSFHGDVTVYLFDQETPTNELSVQGTPEGDTEPSTPPAPPTPPHPTTPGDGFPNSDSGFGGSFEWAEDFPLLPPPGPPLCFSRFSVSPALETPGPPARAPDARPAGPVEN</sequence>
<accession>Q5XJV6</accession>
<accession>A6BLZ0</accession>
<accession>Q52KF1</accession>
<keyword id="KW-0067">ATP-binding</keyword>
<keyword id="KW-0966">Cell projection</keyword>
<keyword id="KW-0333">Golgi apparatus</keyword>
<keyword id="KW-0418">Kinase</keyword>
<keyword id="KW-0460">Magnesium</keyword>
<keyword id="KW-0472">Membrane</keyword>
<keyword id="KW-0479">Metal-binding</keyword>
<keyword id="KW-0488">Methylation</keyword>
<keyword id="KW-0547">Nucleotide-binding</keyword>
<keyword id="KW-0597">Phosphoprotein</keyword>
<keyword id="KW-1185">Reference proteome</keyword>
<keyword id="KW-0723">Serine/threonine-protein kinase</keyword>
<keyword id="KW-0732">Signal</keyword>
<keyword id="KW-0808">Transferase</keyword>
<keyword id="KW-0812">Transmembrane</keyword>
<keyword id="KW-1133">Transmembrane helix</keyword>
<feature type="signal peptide" evidence="2">
    <location>
        <begin position="1"/>
        <end position="20"/>
    </location>
</feature>
<feature type="chain" id="PRO_0000259461" description="Serine/threonine-protein kinase LMTK3">
    <location>
        <begin position="21"/>
        <end position="1424"/>
    </location>
</feature>
<feature type="transmembrane region" description="Helical" evidence="2">
    <location>
        <begin position="40"/>
        <end position="60"/>
    </location>
</feature>
<feature type="domain" description="Protein kinase" evidence="3">
    <location>
        <begin position="133"/>
        <end position="411"/>
    </location>
</feature>
<feature type="region of interest" description="Disordered" evidence="5">
    <location>
        <begin position="74"/>
        <end position="95"/>
    </location>
</feature>
<feature type="region of interest" description="Disordered" evidence="5">
    <location>
        <begin position="413"/>
        <end position="465"/>
    </location>
</feature>
<feature type="region of interest" description="Disordered" evidence="5">
    <location>
        <begin position="486"/>
        <end position="516"/>
    </location>
</feature>
<feature type="region of interest" description="Disordered" evidence="5">
    <location>
        <begin position="544"/>
        <end position="666"/>
    </location>
</feature>
<feature type="region of interest" description="Disordered" evidence="5">
    <location>
        <begin position="680"/>
        <end position="964"/>
    </location>
</feature>
<feature type="region of interest" description="Disordered" evidence="5">
    <location>
        <begin position="976"/>
        <end position="1024"/>
    </location>
</feature>
<feature type="region of interest" description="Disordered" evidence="5">
    <location>
        <begin position="1041"/>
        <end position="1313"/>
    </location>
</feature>
<feature type="region of interest" description="Disordered" evidence="5">
    <location>
        <begin position="1325"/>
        <end position="1424"/>
    </location>
</feature>
<feature type="compositionally biased region" description="Pro residues" evidence="5">
    <location>
        <begin position="418"/>
        <end position="439"/>
    </location>
</feature>
<feature type="compositionally biased region" description="Pro residues" evidence="5">
    <location>
        <begin position="496"/>
        <end position="507"/>
    </location>
</feature>
<feature type="compositionally biased region" description="Polar residues" evidence="5">
    <location>
        <begin position="571"/>
        <end position="584"/>
    </location>
</feature>
<feature type="compositionally biased region" description="Acidic residues" evidence="5">
    <location>
        <begin position="638"/>
        <end position="647"/>
    </location>
</feature>
<feature type="compositionally biased region" description="Basic and acidic residues" evidence="5">
    <location>
        <begin position="700"/>
        <end position="713"/>
    </location>
</feature>
<feature type="compositionally biased region" description="Pro residues" evidence="5">
    <location>
        <begin position="744"/>
        <end position="758"/>
    </location>
</feature>
<feature type="compositionally biased region" description="Low complexity" evidence="5">
    <location>
        <begin position="759"/>
        <end position="791"/>
    </location>
</feature>
<feature type="compositionally biased region" description="Pro residues" evidence="5">
    <location>
        <begin position="818"/>
        <end position="841"/>
    </location>
</feature>
<feature type="compositionally biased region" description="Basic and acidic residues" evidence="5">
    <location>
        <begin position="935"/>
        <end position="954"/>
    </location>
</feature>
<feature type="compositionally biased region" description="Basic and acidic residues" evidence="5">
    <location>
        <begin position="994"/>
        <end position="1004"/>
    </location>
</feature>
<feature type="compositionally biased region" description="Gly residues" evidence="5">
    <location>
        <begin position="1084"/>
        <end position="1094"/>
    </location>
</feature>
<feature type="compositionally biased region" description="Low complexity" evidence="5">
    <location>
        <begin position="1095"/>
        <end position="1105"/>
    </location>
</feature>
<feature type="compositionally biased region" description="Basic and acidic residues" evidence="5">
    <location>
        <begin position="1167"/>
        <end position="1177"/>
    </location>
</feature>
<feature type="compositionally biased region" description="Low complexity" evidence="5">
    <location>
        <begin position="1200"/>
        <end position="1213"/>
    </location>
</feature>
<feature type="compositionally biased region" description="Gly residues" evidence="5">
    <location>
        <begin position="1231"/>
        <end position="1241"/>
    </location>
</feature>
<feature type="compositionally biased region" description="Acidic residues" evidence="5">
    <location>
        <begin position="1245"/>
        <end position="1261"/>
    </location>
</feature>
<feature type="compositionally biased region" description="Basic and acidic residues" evidence="5">
    <location>
        <begin position="1262"/>
        <end position="1272"/>
    </location>
</feature>
<feature type="compositionally biased region" description="Polar residues" evidence="5">
    <location>
        <begin position="1329"/>
        <end position="1339"/>
    </location>
</feature>
<feature type="compositionally biased region" description="Pro residues" evidence="5">
    <location>
        <begin position="1348"/>
        <end position="1360"/>
    </location>
</feature>
<feature type="active site" description="Proton acceptor" evidence="3 4">
    <location>
        <position position="266"/>
    </location>
</feature>
<feature type="binding site" evidence="3">
    <location>
        <begin position="139"/>
        <end position="147"/>
    </location>
    <ligand>
        <name>ATP</name>
        <dbReference type="ChEBI" id="CHEBI:30616"/>
    </ligand>
</feature>
<feature type="binding site" evidence="3">
    <location>
        <position position="164"/>
    </location>
    <ligand>
        <name>ATP</name>
        <dbReference type="ChEBI" id="CHEBI:30616"/>
    </ligand>
</feature>
<feature type="modified residue" description="Phosphoserine" evidence="11">
    <location>
        <position position="232"/>
    </location>
</feature>
<feature type="modified residue" description="Omega-N-methylarginine" evidence="12">
    <location>
        <position position="490"/>
    </location>
</feature>
<feature type="modified residue" description="Phosphoserine" evidence="11">
    <location>
        <position position="531"/>
    </location>
</feature>
<feature type="modified residue" description="Phosphoserine" evidence="11">
    <location>
        <position position="535"/>
    </location>
</feature>
<feature type="modified residue" description="Phosphoserine" evidence="10 11">
    <location>
        <position position="947"/>
    </location>
</feature>
<feature type="modified residue" description="Phosphoserine" evidence="11">
    <location>
        <position position="962"/>
    </location>
</feature>
<feature type="modified residue" description="Phosphoserine" evidence="11">
    <location>
        <position position="977"/>
    </location>
</feature>
<feature type="mutagenesis site" description="Significant decrease in autophosphorylation." evidence="6">
    <original>D</original>
    <variation>V</variation>
    <location>
        <position position="266"/>
    </location>
</feature>
<feature type="sequence conflict" description="In Ref. 1; BAF64834." evidence="8" ref="1">
    <original>D</original>
    <variation>G</variation>
    <location>
        <position position="691"/>
    </location>
</feature>
<feature type="sequence conflict" description="In Ref. 1; BAF64834 and 2; AAH94377." evidence="8" ref="1 2">
    <original>K</original>
    <variation>E</variation>
    <location>
        <position position="811"/>
    </location>
</feature>
<feature type="sequence conflict" description="In Ref. 1; BAF64834." evidence="8" ref="1">
    <original>A</original>
    <variation>E</variation>
    <location>
        <position position="941"/>
    </location>
</feature>
<feature type="sequence conflict" description="In Ref. 1; BAF64834." evidence="8" ref="1">
    <original>K</original>
    <variation>R</variation>
    <location>
        <position position="950"/>
    </location>
</feature>
<feature type="sequence conflict" description="In Ref. 1; BAF64834." evidence="8" ref="1">
    <original>D</original>
    <variation>G</variation>
    <location>
        <position position="1266"/>
    </location>
</feature>
<feature type="sequence conflict" description="In Ref. 1; BAF64834." evidence="8" ref="1">
    <original>V</original>
    <variation>A</variation>
    <location>
        <position position="1287"/>
    </location>
</feature>
<feature type="sequence conflict" description="In Ref. 1; BAF64834." evidence="8" ref="1">
    <original>S</original>
    <variation>N</variation>
    <location>
        <position position="1369"/>
    </location>
</feature>
<organism>
    <name type="scientific">Mus musculus</name>
    <name type="common">Mouse</name>
    <dbReference type="NCBI Taxonomy" id="10090"/>
    <lineage>
        <taxon>Eukaryota</taxon>
        <taxon>Metazoa</taxon>
        <taxon>Chordata</taxon>
        <taxon>Craniata</taxon>
        <taxon>Vertebrata</taxon>
        <taxon>Euteleostomi</taxon>
        <taxon>Mammalia</taxon>
        <taxon>Eutheria</taxon>
        <taxon>Euarchontoglires</taxon>
        <taxon>Glires</taxon>
        <taxon>Rodentia</taxon>
        <taxon>Myomorpha</taxon>
        <taxon>Muroidea</taxon>
        <taxon>Muridae</taxon>
        <taxon>Murinae</taxon>
        <taxon>Mus</taxon>
        <taxon>Mus</taxon>
    </lineage>
</organism>
<proteinExistence type="evidence at protein level"/>
<gene>
    <name type="primary">Lmtk3</name>
    <name type="synonym">Aatyk3</name>
</gene>
<protein>
    <recommendedName>
        <fullName>Serine/threonine-protein kinase LMTK3</fullName>
        <ecNumber evidence="1">2.7.11.1</ecNumber>
    </recommendedName>
    <alternativeName>
        <fullName>Apoptosis-associated tyrosine kinase 3</fullName>
    </alternativeName>
    <alternativeName>
        <fullName>Lemur tyrosine kinase 3</fullName>
    </alternativeName>
</protein>
<name>LMTK3_MOUSE</name>
<reference key="1">
    <citation type="journal article" date="2007" name="Neuroscience">
        <title>Structural and functional analysis of the apoptosis-associated tyrosine kinase (AATYK) family.</title>
        <authorList>
            <person name="Tomomura M."/>
            <person name="Morita N."/>
            <person name="Yoshikawa F."/>
            <person name="Konishi A."/>
            <person name="Akiyama H."/>
            <person name="Furuichi T."/>
            <person name="Kamiguchi H."/>
        </authorList>
    </citation>
    <scope>NUCLEOTIDE SEQUENCE [MRNA]</scope>
    <scope>SUBCELLULAR LOCATION</scope>
    <scope>TISSUE SPECIFICITY</scope>
    <scope>DEVELOPMENTAL STAGE</scope>
    <scope>PHOSPHORYLATION</scope>
    <scope>MUTAGENESIS OF ASP-266</scope>
    <source>
        <tissue>Brain</tissue>
    </source>
</reference>
<reference key="2">
    <citation type="journal article" date="2004" name="Genome Res.">
        <title>The status, quality, and expansion of the NIH full-length cDNA project: the Mammalian Gene Collection (MGC).</title>
        <authorList>
            <consortium name="The MGC Project Team"/>
        </authorList>
    </citation>
    <scope>NUCLEOTIDE SEQUENCE [LARGE SCALE MRNA]</scope>
    <source>
        <strain>C57BL/6J</strain>
        <tissue>Brain</tissue>
    </source>
</reference>
<reference key="3">
    <citation type="journal article" date="2006" name="Mol. Cell. Proteomics">
        <title>Comprehensive identification of phosphorylation sites in postsynaptic density preparations.</title>
        <authorList>
            <person name="Trinidad J.C."/>
            <person name="Specht C.G."/>
            <person name="Thalhammer A."/>
            <person name="Schoepfer R."/>
            <person name="Burlingame A.L."/>
        </authorList>
    </citation>
    <scope>PHOSPHORYLATION [LARGE SCALE ANALYSIS] AT SER-947</scope>
    <scope>IDENTIFICATION BY MASS SPECTROMETRY [LARGE SCALE ANALYSIS]</scope>
    <source>
        <tissue>Brain</tissue>
    </source>
</reference>
<reference key="4">
    <citation type="journal article" date="2007" name="Mol. Cell. Proteomics">
        <title>Qualitative and quantitative analyses of protein phosphorylation in naive and stimulated mouse synaptosomal preparations.</title>
        <authorList>
            <person name="Munton R.P."/>
            <person name="Tweedie-Cullen R."/>
            <person name="Livingstone-Zatchej M."/>
            <person name="Weinandy F."/>
            <person name="Waidelich M."/>
            <person name="Longo D."/>
            <person name="Gehrig P."/>
            <person name="Potthast F."/>
            <person name="Rutishauser D."/>
            <person name="Gerrits B."/>
            <person name="Panse C."/>
            <person name="Schlapbach R."/>
            <person name="Mansuy I.M."/>
        </authorList>
    </citation>
    <scope>IDENTIFICATION BY MASS SPECTROMETRY [LARGE SCALE ANALYSIS]</scope>
    <source>
        <tissue>Brain cortex</tissue>
    </source>
</reference>
<reference key="5">
    <citation type="journal article" date="2010" name="Cell">
        <title>A tissue-specific atlas of mouse protein phosphorylation and expression.</title>
        <authorList>
            <person name="Huttlin E.L."/>
            <person name="Jedrychowski M.P."/>
            <person name="Elias J.E."/>
            <person name="Goswami T."/>
            <person name="Rad R."/>
            <person name="Beausoleil S.A."/>
            <person name="Villen J."/>
            <person name="Haas W."/>
            <person name="Sowa M.E."/>
            <person name="Gygi S.P."/>
        </authorList>
    </citation>
    <scope>PHOSPHORYLATION [LARGE SCALE ANALYSIS] AT SER-232; SER-531; SER-535; SER-947; SER-962 AND SER-977</scope>
    <scope>IDENTIFICATION BY MASS SPECTROMETRY [LARGE SCALE ANALYSIS]</scope>
    <source>
        <tissue>Brain</tissue>
    </source>
</reference>
<reference key="6">
    <citation type="journal article" date="2014" name="J. Neurosci.">
        <title>LMTK3 deficiency causes pronounced locomotor hyperactivity and impairs endocytic trafficking.</title>
        <authorList>
            <person name="Inoue T."/>
            <person name="Hoshina N."/>
            <person name="Nakazawa T."/>
            <person name="Kiyama Y."/>
            <person name="Kobayashi S."/>
            <person name="Abe T."/>
            <person name="Yamamoto T."/>
            <person name="Manabe T."/>
            <person name="Yamamoto T."/>
        </authorList>
    </citation>
    <scope>FUNCTION</scope>
    <scope>INTERACTION WITH AP-2 COMPLEX SUBUNIT ALPHA</scope>
    <scope>SUBCELLULAR LOCATION</scope>
    <scope>TISSUE SPECIFICITY</scope>
    <scope>DISRUPTION PHENOTYPE</scope>
</reference>
<reference key="7">
    <citation type="journal article" date="2014" name="Mol. Cell. Proteomics">
        <title>Immunoaffinity enrichment and mass spectrometry analysis of protein methylation.</title>
        <authorList>
            <person name="Guo A."/>
            <person name="Gu H."/>
            <person name="Zhou J."/>
            <person name="Mulhern D."/>
            <person name="Wang Y."/>
            <person name="Lee K.A."/>
            <person name="Yang V."/>
            <person name="Aguiar M."/>
            <person name="Kornhauser J."/>
            <person name="Jia X."/>
            <person name="Ren J."/>
            <person name="Beausoleil S.A."/>
            <person name="Silva J.C."/>
            <person name="Vemulapalli V."/>
            <person name="Bedford M.T."/>
            <person name="Comb M.J."/>
        </authorList>
    </citation>
    <scope>METHYLATION [LARGE SCALE ANALYSIS] AT ARG-490</scope>
    <scope>IDENTIFICATION BY MASS SPECTROMETRY [LARGE SCALE ANALYSIS]</scope>
    <source>
        <tissue>Brain</tissue>
        <tissue>Embryo</tissue>
    </source>
</reference>
<comment type="function">
    <text evidence="1 7">Protein kinase which phosphorylates ESR1 (in vitro) and protects it against proteasomal degradation. May also regulate ESR1 levels indirectly via a PKC-AKT-FOXO3 pathway where it decreases the activity of PKC and the phosphorylation of AKT, thereby increasing binding of transcriptional activator FOXO3 to the ESR1 promoter and increasing ESR1 transcription (By similarity). Involved in endocytic trafficking of N-methyl-D-aspartate receptors (NMDAR) in neurons (PubMed:24760852).</text>
</comment>
<comment type="catalytic activity">
    <reaction evidence="1">
        <text>L-seryl-[protein] + ATP = O-phospho-L-seryl-[protein] + ADP + H(+)</text>
        <dbReference type="Rhea" id="RHEA:17989"/>
        <dbReference type="Rhea" id="RHEA-COMP:9863"/>
        <dbReference type="Rhea" id="RHEA-COMP:11604"/>
        <dbReference type="ChEBI" id="CHEBI:15378"/>
        <dbReference type="ChEBI" id="CHEBI:29999"/>
        <dbReference type="ChEBI" id="CHEBI:30616"/>
        <dbReference type="ChEBI" id="CHEBI:83421"/>
        <dbReference type="ChEBI" id="CHEBI:456216"/>
        <dbReference type="EC" id="2.7.11.1"/>
    </reaction>
</comment>
<comment type="catalytic activity">
    <reaction evidence="1">
        <text>L-threonyl-[protein] + ATP = O-phospho-L-threonyl-[protein] + ADP + H(+)</text>
        <dbReference type="Rhea" id="RHEA:46608"/>
        <dbReference type="Rhea" id="RHEA-COMP:11060"/>
        <dbReference type="Rhea" id="RHEA-COMP:11605"/>
        <dbReference type="ChEBI" id="CHEBI:15378"/>
        <dbReference type="ChEBI" id="CHEBI:30013"/>
        <dbReference type="ChEBI" id="CHEBI:30616"/>
        <dbReference type="ChEBI" id="CHEBI:61977"/>
        <dbReference type="ChEBI" id="CHEBI:456216"/>
        <dbReference type="EC" id="2.7.11.1"/>
    </reaction>
</comment>
<comment type="cofactor">
    <cofactor evidence="1">
        <name>Mg(2+)</name>
        <dbReference type="ChEBI" id="CHEBI:18420"/>
    </cofactor>
</comment>
<comment type="subunit">
    <text evidence="1 7">Interacts with ESR1 (By similarity). Interacts with AP-2 complex subunit alpha (PubMed:24760852).</text>
</comment>
<comment type="subcellular location">
    <subcellularLocation>
        <location evidence="9">Membrane</location>
        <topology evidence="9">Single-pass membrane protein</topology>
    </subcellularLocation>
    <subcellularLocation>
        <location evidence="6">Cell projection</location>
        <location evidence="6">Axon</location>
    </subcellularLocation>
    <subcellularLocation>
        <location evidence="6">Cell projection</location>
        <location evidence="6">Dendrite</location>
    </subcellularLocation>
    <subcellularLocation>
        <location evidence="7">Golgi apparatus membrane</location>
    </subcellularLocation>
    <text>Punctate pattern in cell projections.</text>
</comment>
<comment type="tissue specificity">
    <text evidence="6 7">Expressed in brain. Predominantly expressed in cerebral cortex, thalamus, the cerebellum and hippocampal formation (at protein level).</text>
</comment>
<comment type="developmental stage">
    <text evidence="6">Up-regulated during postnatal development, and expressed in adult stage.</text>
</comment>
<comment type="PTM">
    <text evidence="6">Autophosphorylated.</text>
</comment>
<comment type="disruption phenotype">
    <text evidence="7">Viable and grossly normal. Mice exhibit prominent behavioral abnormalities, including locomotor hyperactivity, reduced anxiety, and decreased depression-like behavior.</text>
</comment>
<comment type="similarity">
    <text evidence="3">Belongs to the protein kinase superfamily. Tyr protein kinase family.</text>
</comment>
<dbReference type="EC" id="2.7.11.1" evidence="1"/>
<dbReference type="EMBL" id="AB288873">
    <property type="protein sequence ID" value="BAF64834.1"/>
    <property type="molecule type" value="mRNA"/>
</dbReference>
<dbReference type="EMBL" id="BC083185">
    <property type="protein sequence ID" value="AAH83185.1"/>
    <property type="molecule type" value="mRNA"/>
</dbReference>
<dbReference type="EMBL" id="BC094377">
    <property type="protein sequence ID" value="AAH94377.1"/>
    <property type="molecule type" value="mRNA"/>
</dbReference>
<dbReference type="CCDS" id="CCDS39961.1"/>
<dbReference type="RefSeq" id="NP_001005511.2">
    <property type="nucleotide sequence ID" value="NM_001005511.3"/>
</dbReference>
<dbReference type="RefSeq" id="NP_001277919.1">
    <property type="nucleotide sequence ID" value="NM_001290990.1"/>
</dbReference>
<dbReference type="RefSeq" id="XP_006541027.1">
    <property type="nucleotide sequence ID" value="XM_006540964.3"/>
</dbReference>
<dbReference type="RefSeq" id="XP_017177816.1">
    <property type="nucleotide sequence ID" value="XM_017322327.1"/>
</dbReference>
<dbReference type="SMR" id="Q5XJV6"/>
<dbReference type="BioGRID" id="238177">
    <property type="interactions" value="4"/>
</dbReference>
<dbReference type="FunCoup" id="Q5XJV6">
    <property type="interactions" value="205"/>
</dbReference>
<dbReference type="IntAct" id="Q5XJV6">
    <property type="interactions" value="6"/>
</dbReference>
<dbReference type="MINT" id="Q5XJV6"/>
<dbReference type="STRING" id="10090.ENSMUSP00000112592"/>
<dbReference type="GlyGen" id="Q5XJV6">
    <property type="glycosylation" value="4 sites, 1 O-linked glycan (3 sites)"/>
</dbReference>
<dbReference type="iPTMnet" id="Q5XJV6"/>
<dbReference type="PhosphoSitePlus" id="Q5XJV6"/>
<dbReference type="SwissPalm" id="Q5XJV6"/>
<dbReference type="jPOST" id="Q5XJV6"/>
<dbReference type="PaxDb" id="10090-ENSMUSP00000112592"/>
<dbReference type="ProteomicsDB" id="292344"/>
<dbReference type="DNASU" id="381983"/>
<dbReference type="GeneID" id="381983"/>
<dbReference type="KEGG" id="mmu:381983"/>
<dbReference type="AGR" id="MGI:3039582"/>
<dbReference type="CTD" id="114783"/>
<dbReference type="MGI" id="MGI:3039582">
    <property type="gene designation" value="Lmtk3"/>
</dbReference>
<dbReference type="eggNOG" id="ENOG502R1RA">
    <property type="taxonomic scope" value="Eukaryota"/>
</dbReference>
<dbReference type="InParanoid" id="Q5XJV6"/>
<dbReference type="PhylomeDB" id="Q5XJV6"/>
<dbReference type="TreeFam" id="TF332280"/>
<dbReference type="BioGRID-ORCS" id="381983">
    <property type="hits" value="1 hit in 79 CRISPR screens"/>
</dbReference>
<dbReference type="CD-CODE" id="CE726F99">
    <property type="entry name" value="Postsynaptic density"/>
</dbReference>
<dbReference type="ChiTaRS" id="Lmtk3">
    <property type="organism name" value="mouse"/>
</dbReference>
<dbReference type="PRO" id="PR:Q5XJV6"/>
<dbReference type="Proteomes" id="UP000000589">
    <property type="component" value="Unplaced"/>
</dbReference>
<dbReference type="RNAct" id="Q5XJV6">
    <property type="molecule type" value="protein"/>
</dbReference>
<dbReference type="GO" id="GO:0030424">
    <property type="term" value="C:axon"/>
    <property type="evidence" value="ECO:0007669"/>
    <property type="project" value="UniProtKB-SubCell"/>
</dbReference>
<dbReference type="GO" id="GO:0030425">
    <property type="term" value="C:dendrite"/>
    <property type="evidence" value="ECO:0007669"/>
    <property type="project" value="UniProtKB-SubCell"/>
</dbReference>
<dbReference type="GO" id="GO:0000139">
    <property type="term" value="C:Golgi membrane"/>
    <property type="evidence" value="ECO:0007669"/>
    <property type="project" value="UniProtKB-SubCell"/>
</dbReference>
<dbReference type="GO" id="GO:0005524">
    <property type="term" value="F:ATP binding"/>
    <property type="evidence" value="ECO:0007669"/>
    <property type="project" value="UniProtKB-KW"/>
</dbReference>
<dbReference type="GO" id="GO:0046872">
    <property type="term" value="F:metal ion binding"/>
    <property type="evidence" value="ECO:0007669"/>
    <property type="project" value="UniProtKB-KW"/>
</dbReference>
<dbReference type="GO" id="GO:0106310">
    <property type="term" value="F:protein serine kinase activity"/>
    <property type="evidence" value="ECO:0007669"/>
    <property type="project" value="RHEA"/>
</dbReference>
<dbReference type="GO" id="GO:0004674">
    <property type="term" value="F:protein serine/threonine kinase activity"/>
    <property type="evidence" value="ECO:0007669"/>
    <property type="project" value="UniProtKB-KW"/>
</dbReference>
<dbReference type="FunFam" id="1.10.510.10:FF:000347">
    <property type="entry name" value="Apoptosis associated tyrosine kinase"/>
    <property type="match status" value="1"/>
</dbReference>
<dbReference type="FunFam" id="3.30.200.20:FF:000275">
    <property type="entry name" value="Apoptosis associated tyrosine kinase"/>
    <property type="match status" value="1"/>
</dbReference>
<dbReference type="Gene3D" id="3.30.200.20">
    <property type="entry name" value="Phosphorylase Kinase, domain 1"/>
    <property type="match status" value="1"/>
</dbReference>
<dbReference type="Gene3D" id="1.10.510.10">
    <property type="entry name" value="Transferase(Phosphotransferase) domain 1"/>
    <property type="match status" value="1"/>
</dbReference>
<dbReference type="InterPro" id="IPR011009">
    <property type="entry name" value="Kinase-like_dom_sf"/>
</dbReference>
<dbReference type="InterPro" id="IPR000719">
    <property type="entry name" value="Prot_kinase_dom"/>
</dbReference>
<dbReference type="InterPro" id="IPR017441">
    <property type="entry name" value="Protein_kinase_ATP_BS"/>
</dbReference>
<dbReference type="InterPro" id="IPR001245">
    <property type="entry name" value="Ser-Thr/Tyr_kinase_cat_dom"/>
</dbReference>
<dbReference type="InterPro" id="IPR008266">
    <property type="entry name" value="Tyr_kinase_AS"/>
</dbReference>
<dbReference type="PANTHER" id="PTHR24417">
    <property type="entry name" value="SERINE/THREONINE-PROTEIN KINASE LMTK1"/>
    <property type="match status" value="1"/>
</dbReference>
<dbReference type="PANTHER" id="PTHR24417:SF2">
    <property type="entry name" value="SERINE_THREONINE-PROTEIN KINASE LMTK3"/>
    <property type="match status" value="1"/>
</dbReference>
<dbReference type="Pfam" id="PF07714">
    <property type="entry name" value="PK_Tyr_Ser-Thr"/>
    <property type="match status" value="1"/>
</dbReference>
<dbReference type="PRINTS" id="PR00109">
    <property type="entry name" value="TYRKINASE"/>
</dbReference>
<dbReference type="SUPFAM" id="SSF56112">
    <property type="entry name" value="Protein kinase-like (PK-like)"/>
    <property type="match status" value="1"/>
</dbReference>
<dbReference type="PROSITE" id="PS00107">
    <property type="entry name" value="PROTEIN_KINASE_ATP"/>
    <property type="match status" value="1"/>
</dbReference>
<dbReference type="PROSITE" id="PS50011">
    <property type="entry name" value="PROTEIN_KINASE_DOM"/>
    <property type="match status" value="1"/>
</dbReference>
<dbReference type="PROSITE" id="PS00109">
    <property type="entry name" value="PROTEIN_KINASE_TYR"/>
    <property type="match status" value="1"/>
</dbReference>